<reference key="1">
    <citation type="journal article" date="2009" name="Proc. Natl. Acad. Sci. U.S.A.">
        <title>Characterizing a model human gut microbiota composed of members of its two dominant bacterial phyla.</title>
        <authorList>
            <person name="Mahowald M.A."/>
            <person name="Rey F.E."/>
            <person name="Seedorf H."/>
            <person name="Turnbaugh P.J."/>
            <person name="Fulton R.S."/>
            <person name="Wollam A."/>
            <person name="Shah N."/>
            <person name="Wang C."/>
            <person name="Magrini V."/>
            <person name="Wilson R.K."/>
            <person name="Cantarel B.L."/>
            <person name="Coutinho P.M."/>
            <person name="Henrissat B."/>
            <person name="Crock L.W."/>
            <person name="Russell A."/>
            <person name="Verberkmoes N.C."/>
            <person name="Hettich R.L."/>
            <person name="Gordon J.I."/>
        </authorList>
    </citation>
    <scope>NUCLEOTIDE SEQUENCE [LARGE SCALE GENOMIC DNA]</scope>
    <source>
        <strain>ATCC 33656 / DSM 3377 / JCM 17463 / KCTC 5835 / LMG 30912 / VPI 0990</strain>
    </source>
</reference>
<proteinExistence type="inferred from homology"/>
<feature type="chain" id="PRO_1000212412" description="Putative pre-16S rRNA nuclease">
    <location>
        <begin position="1"/>
        <end position="143"/>
    </location>
</feature>
<comment type="function">
    <text evidence="1">Could be a nuclease involved in processing of the 5'-end of pre-16S rRNA.</text>
</comment>
<comment type="subcellular location">
    <subcellularLocation>
        <location evidence="1">Cytoplasm</location>
    </subcellularLocation>
</comment>
<comment type="similarity">
    <text evidence="1">Belongs to the YqgF nuclease family.</text>
</comment>
<keyword id="KW-0963">Cytoplasm</keyword>
<keyword id="KW-0378">Hydrolase</keyword>
<keyword id="KW-0540">Nuclease</keyword>
<keyword id="KW-0690">Ribosome biogenesis</keyword>
<gene>
    <name type="ordered locus">EUBREC_1895</name>
</gene>
<organism>
    <name type="scientific">Agathobacter rectalis (strain ATCC 33656 / DSM 3377 / JCM 17463 / KCTC 5835 / VPI 0990)</name>
    <name type="common">Eubacterium rectale</name>
    <dbReference type="NCBI Taxonomy" id="515619"/>
    <lineage>
        <taxon>Bacteria</taxon>
        <taxon>Bacillati</taxon>
        <taxon>Bacillota</taxon>
        <taxon>Clostridia</taxon>
        <taxon>Lachnospirales</taxon>
        <taxon>Lachnospiraceae</taxon>
        <taxon>Agathobacter</taxon>
    </lineage>
</organism>
<name>YQGF_AGARV</name>
<dbReference type="EC" id="3.1.-.-" evidence="1"/>
<dbReference type="EMBL" id="CP001107">
    <property type="protein sequence ID" value="ACR75639.1"/>
    <property type="molecule type" value="Genomic_DNA"/>
</dbReference>
<dbReference type="SMR" id="C4ZAY4"/>
<dbReference type="STRING" id="515619.EUBREC_1895"/>
<dbReference type="PaxDb" id="515619-EUBREC_1895"/>
<dbReference type="KEGG" id="ere:EUBREC_1895"/>
<dbReference type="HOGENOM" id="CLU_098240_2_0_9"/>
<dbReference type="Proteomes" id="UP000001477">
    <property type="component" value="Chromosome"/>
</dbReference>
<dbReference type="GO" id="GO:0005829">
    <property type="term" value="C:cytosol"/>
    <property type="evidence" value="ECO:0007669"/>
    <property type="project" value="TreeGrafter"/>
</dbReference>
<dbReference type="GO" id="GO:0004518">
    <property type="term" value="F:nuclease activity"/>
    <property type="evidence" value="ECO:0007669"/>
    <property type="project" value="UniProtKB-KW"/>
</dbReference>
<dbReference type="GO" id="GO:0000967">
    <property type="term" value="P:rRNA 5'-end processing"/>
    <property type="evidence" value="ECO:0007669"/>
    <property type="project" value="UniProtKB-UniRule"/>
</dbReference>
<dbReference type="CDD" id="cd16964">
    <property type="entry name" value="YqgF"/>
    <property type="match status" value="1"/>
</dbReference>
<dbReference type="Gene3D" id="3.30.420.140">
    <property type="entry name" value="YqgF/RNase H-like domain"/>
    <property type="match status" value="1"/>
</dbReference>
<dbReference type="HAMAP" id="MF_00651">
    <property type="entry name" value="Nuclease_YqgF"/>
    <property type="match status" value="1"/>
</dbReference>
<dbReference type="InterPro" id="IPR012337">
    <property type="entry name" value="RNaseH-like_sf"/>
</dbReference>
<dbReference type="InterPro" id="IPR005227">
    <property type="entry name" value="YqgF"/>
</dbReference>
<dbReference type="InterPro" id="IPR006641">
    <property type="entry name" value="YqgF/RNaseH-like_dom"/>
</dbReference>
<dbReference type="InterPro" id="IPR037027">
    <property type="entry name" value="YqgF/RNaseH-like_dom_sf"/>
</dbReference>
<dbReference type="NCBIfam" id="TIGR00250">
    <property type="entry name" value="RNAse_H_YqgF"/>
    <property type="match status" value="1"/>
</dbReference>
<dbReference type="PANTHER" id="PTHR33317">
    <property type="entry name" value="POLYNUCLEOTIDYL TRANSFERASE, RIBONUCLEASE H-LIKE SUPERFAMILY PROTEIN"/>
    <property type="match status" value="1"/>
</dbReference>
<dbReference type="PANTHER" id="PTHR33317:SF4">
    <property type="entry name" value="POLYNUCLEOTIDYL TRANSFERASE, RIBONUCLEASE H-LIKE SUPERFAMILY PROTEIN"/>
    <property type="match status" value="1"/>
</dbReference>
<dbReference type="Pfam" id="PF03652">
    <property type="entry name" value="RuvX"/>
    <property type="match status" value="1"/>
</dbReference>
<dbReference type="SMART" id="SM00732">
    <property type="entry name" value="YqgFc"/>
    <property type="match status" value="1"/>
</dbReference>
<dbReference type="SUPFAM" id="SSF53098">
    <property type="entry name" value="Ribonuclease H-like"/>
    <property type="match status" value="1"/>
</dbReference>
<sequence>MRILGLDFGSKTVGVAVSDELLITAQGVEIVRRKSPSKLRQTLARIEEIIAEYKVDRIVLGYPKNMNNTEGERCEKTKEFGDMLARRTGLEVIYWDERLTTVAADRSMMETGIRRENRKEFVDEIAAIFILQGYLDYLSNSRS</sequence>
<protein>
    <recommendedName>
        <fullName evidence="1">Putative pre-16S rRNA nuclease</fullName>
        <ecNumber evidence="1">3.1.-.-</ecNumber>
    </recommendedName>
</protein>
<evidence type="ECO:0000255" key="1">
    <source>
        <dbReference type="HAMAP-Rule" id="MF_00651"/>
    </source>
</evidence>
<accession>C4ZAY4</accession>